<reference key="1">
    <citation type="journal article" date="1995" name="Proc. Natl. Acad. Sci. U.S.A.">
        <title>The nucleotide sequence of chromosome I from Saccharomyces cerevisiae.</title>
        <authorList>
            <person name="Bussey H."/>
            <person name="Kaback D.B."/>
            <person name="Zhong W.-W."/>
            <person name="Vo D.H."/>
            <person name="Clark M.W."/>
            <person name="Fortin N."/>
            <person name="Hall J."/>
            <person name="Ouellette B.F.F."/>
            <person name="Keng T."/>
            <person name="Barton A.B."/>
            <person name="Su Y."/>
            <person name="Davies C.J."/>
            <person name="Storms R.K."/>
        </authorList>
    </citation>
    <scope>NUCLEOTIDE SEQUENCE [LARGE SCALE GENOMIC DNA]</scope>
    <source>
        <strain>ATCC 204508 / S288c</strain>
    </source>
</reference>
<reference key="2">
    <citation type="journal article" date="2014" name="G3 (Bethesda)">
        <title>The reference genome sequence of Saccharomyces cerevisiae: Then and now.</title>
        <authorList>
            <person name="Engel S.R."/>
            <person name="Dietrich F.S."/>
            <person name="Fisk D.G."/>
            <person name="Binkley G."/>
            <person name="Balakrishnan R."/>
            <person name="Costanzo M.C."/>
            <person name="Dwight S.S."/>
            <person name="Hitz B.C."/>
            <person name="Karra K."/>
            <person name="Nash R.S."/>
            <person name="Weng S."/>
            <person name="Wong E.D."/>
            <person name="Lloyd P."/>
            <person name="Skrzypek M.S."/>
            <person name="Miyasato S.R."/>
            <person name="Simison M."/>
            <person name="Cherry J.M."/>
        </authorList>
    </citation>
    <scope>GENOME REANNOTATION</scope>
    <source>
        <strain>ATCC 204508 / S288c</strain>
    </source>
</reference>
<reference key="3">
    <citation type="journal article" date="2002" name="Nat. Biotechnol.">
        <title>An integrated approach for finding overlooked genes in yeast.</title>
        <authorList>
            <person name="Kumar A."/>
            <person name="Harrison P.M."/>
            <person name="Cheung K.-H."/>
            <person name="Lan N."/>
            <person name="Echols N."/>
            <person name="Bertone P."/>
            <person name="Miller P."/>
            <person name="Gerstein M.B."/>
            <person name="Snyder M."/>
        </authorList>
    </citation>
    <scope>NUCLEOTIDE SEQUENCE [GENOMIC DNA]</scope>
</reference>
<evidence type="ECO:0000305" key="1"/>
<evidence type="ECO:0000305" key="2">
    <source>
    </source>
</evidence>
<name>YAG8_YEAST</name>
<proteinExistence type="uncertain"/>
<dbReference type="EMBL" id="U73805">
    <property type="status" value="NOT_ANNOTATED_CDS"/>
    <property type="molecule type" value="Genomic_DNA"/>
</dbReference>
<dbReference type="EMBL" id="AF479986">
    <property type="protein sequence ID" value="AAL79299.1"/>
    <property type="molecule type" value="Genomic_DNA"/>
</dbReference>
<dbReference type="STRING" id="4932.YAL068W-A"/>
<dbReference type="PaxDb" id="4932-YAL068W-A"/>
<dbReference type="EnsemblFungi" id="YAL068W-A_mRNA">
    <property type="protein sequence ID" value="YAL068W-A"/>
    <property type="gene ID" value="YAL068W-A"/>
</dbReference>
<dbReference type="AGR" id="SGD:S000028594"/>
<dbReference type="SGD" id="S000028594">
    <property type="gene designation" value="YAL068W-A"/>
</dbReference>
<dbReference type="GeneTree" id="ENSGT00940000177535"/>
<dbReference type="HOGENOM" id="CLU_164954_0_0_1"/>
<dbReference type="InterPro" id="IPR007414">
    <property type="entry name" value="DUF468"/>
</dbReference>
<dbReference type="Pfam" id="PF04318">
    <property type="entry name" value="DUF468"/>
    <property type="match status" value="1"/>
</dbReference>
<accession>Q8TGK7</accession>
<comment type="miscellaneous">
    <text evidence="1">Contained within a telomeric X element core sequence.</text>
</comment>
<comment type="similarity">
    <text evidence="1">Belongs to the UPF0320 family.</text>
</comment>
<comment type="caution">
    <text evidence="2">Product of a dubious gene prediction unlikely to encode a functional protein. Because of that it is not part of the S.cerevisiae S288c complete/reference proteome set.</text>
</comment>
<protein>
    <recommendedName>
        <fullName>Putative UPF0320 protein YAL068W-A</fullName>
    </recommendedName>
</protein>
<feature type="chain" id="PRO_0000211368" description="Putative UPF0320 protein YAL068W-A">
    <location>
        <begin position="1"/>
        <end position="84"/>
    </location>
</feature>
<sequence length="84" mass="9656">MHGTCLSGLYPVPFTHNAHHYPHFDIYISFGGPKYCITALNTYVIPLLHHILTTPFIYTYVNITEKSPQKSPKHKNILLFNNNT</sequence>
<gene>
    <name type="ordered locus">YAL068W-A</name>
</gene>
<organism>
    <name type="scientific">Saccharomyces cerevisiae (strain ATCC 204508 / S288c)</name>
    <name type="common">Baker's yeast</name>
    <dbReference type="NCBI Taxonomy" id="559292"/>
    <lineage>
        <taxon>Eukaryota</taxon>
        <taxon>Fungi</taxon>
        <taxon>Dikarya</taxon>
        <taxon>Ascomycota</taxon>
        <taxon>Saccharomycotina</taxon>
        <taxon>Saccharomycetes</taxon>
        <taxon>Saccharomycetales</taxon>
        <taxon>Saccharomycetaceae</taxon>
        <taxon>Saccharomyces</taxon>
    </lineage>
</organism>